<keyword id="KW-0008">Acetylcholine receptor inhibiting toxin</keyword>
<keyword id="KW-1015">Disulfide bond</keyword>
<keyword id="KW-0379">Hydroxylation</keyword>
<keyword id="KW-0872">Ion channel impairing toxin</keyword>
<keyword id="KW-0528">Neurotoxin</keyword>
<keyword id="KW-0629">Postsynaptic neurotoxin</keyword>
<keyword id="KW-0964">Secreted</keyword>
<keyword id="KW-0800">Toxin</keyword>
<proteinExistence type="evidence at protein level"/>
<evidence type="ECO:0000250" key="1"/>
<evidence type="ECO:0000250" key="2">
    <source>
        <dbReference type="UniProtKB" id="P56636"/>
    </source>
</evidence>
<evidence type="ECO:0000269" key="3">
    <source>
    </source>
</evidence>
<evidence type="ECO:0000269" key="4">
    <source>
    </source>
</evidence>
<evidence type="ECO:0000303" key="5">
    <source>
    </source>
</evidence>
<evidence type="ECO:0000305" key="6"/>
<evidence type="ECO:0000305" key="7">
    <source>
    </source>
</evidence>
<comment type="function">
    <molecule>Alpha-conotoxin ArIA</molecule>
    <text evidence="3">Alpha-conotoxins act on postsynaptic membranes, they bind to the nicotinic acetylcholine receptors (nAChR) and thus inhibit them. This toxin acts as a competitive inhibitor and is 3-fold more potent on alpha-7/CHRNA7 nAChRs (IC(50)=6 nM) than on alpha-3-beta-2/CHRNA3-CHRNB2 nAChR (IC(50)=18 nM).</text>
</comment>
<comment type="function">
    <molecule>Alpha-conotoxin ArIB</molecule>
    <text evidence="3">Acts as a competitive inhibitor and is 33-fold more potent on alpha-7/CHRNA7 nAChRs (IC(50)=1.8 nM) than on alpha-3-beta-2/CHRNA3-CHRNB2 nAChR (IC(50)=60.1 nM).</text>
</comment>
<comment type="subcellular location">
    <subcellularLocation>
        <location evidence="7">Secreted</location>
    </subcellularLocation>
</comment>
<comment type="tissue specificity">
    <text evidence="7">Expressed by the venom duct.</text>
</comment>
<comment type="domain">
    <text evidence="6">The cysteine framework is I (CC-C-C). Alpha4/7 pattern.</text>
</comment>
<comment type="miscellaneous">
    <text evidence="3 4">The mutant ArIB[V30L,V35D] is a potent and selective competitive antagonist of rat and human alpha-7/CHRNA7 nAChRs, making it an attractive probe for this receptor subtype.</text>
</comment>
<comment type="similarity">
    <text evidence="6">Belongs to the conotoxin A superfamily.</text>
</comment>
<accession>P0C8R2</accession>
<organism>
    <name type="scientific">Conus arenatus</name>
    <name type="common">Sand-dusted cone</name>
    <dbReference type="NCBI Taxonomy" id="89451"/>
    <lineage>
        <taxon>Eukaryota</taxon>
        <taxon>Metazoa</taxon>
        <taxon>Spiralia</taxon>
        <taxon>Lophotrochozoa</taxon>
        <taxon>Mollusca</taxon>
        <taxon>Gastropoda</taxon>
        <taxon>Caenogastropoda</taxon>
        <taxon>Neogastropoda</taxon>
        <taxon>Conoidea</taxon>
        <taxon>Conidae</taxon>
        <taxon>Conus</taxon>
    </lineage>
</organism>
<name>CA1A_CONAE</name>
<dbReference type="ConoServer" id="2838">
    <property type="toxin name" value="ArIA precursor"/>
</dbReference>
<dbReference type="ConoServer" id="3450">
    <property type="toxin name" value="Sequence 299 from Patent EP1852440"/>
</dbReference>
<dbReference type="ConoServer" id="351">
    <property type="toxin name" value="Sequence 300 from patent US 6797808"/>
</dbReference>
<dbReference type="GO" id="GO:0005576">
    <property type="term" value="C:extracellular region"/>
    <property type="evidence" value="ECO:0007669"/>
    <property type="project" value="UniProtKB-SubCell"/>
</dbReference>
<dbReference type="GO" id="GO:0035792">
    <property type="term" value="C:host cell postsynaptic membrane"/>
    <property type="evidence" value="ECO:0007669"/>
    <property type="project" value="UniProtKB-KW"/>
</dbReference>
<dbReference type="GO" id="GO:0030550">
    <property type="term" value="F:acetylcholine receptor inhibitor activity"/>
    <property type="evidence" value="ECO:0007669"/>
    <property type="project" value="UniProtKB-KW"/>
</dbReference>
<dbReference type="GO" id="GO:0099106">
    <property type="term" value="F:ion channel regulator activity"/>
    <property type="evidence" value="ECO:0007669"/>
    <property type="project" value="UniProtKB-KW"/>
</dbReference>
<dbReference type="GO" id="GO:0090729">
    <property type="term" value="F:toxin activity"/>
    <property type="evidence" value="ECO:0007669"/>
    <property type="project" value="UniProtKB-KW"/>
</dbReference>
<dbReference type="InterPro" id="IPR009958">
    <property type="entry name" value="Conotoxin_a-typ"/>
</dbReference>
<dbReference type="InterPro" id="IPR018072">
    <property type="entry name" value="Conotoxin_a-typ_CS"/>
</dbReference>
<dbReference type="Pfam" id="PF07365">
    <property type="entry name" value="Toxin_8"/>
    <property type="match status" value="1"/>
</dbReference>
<dbReference type="PROSITE" id="PS60014">
    <property type="entry name" value="ALPHA_CONOTOXIN"/>
    <property type="match status" value="1"/>
</dbReference>
<feature type="propeptide" id="PRO_0000363985" evidence="1">
    <location>
        <begin position="1" status="less than"/>
        <end position="17"/>
    </location>
</feature>
<feature type="peptide" id="PRO_0000363986" description="Alpha-conotoxin ArIA" evidence="7">
    <location>
        <begin position="18"/>
        <end position="36"/>
    </location>
</feature>
<feature type="peptide" id="PRO_0000363987" description="Alpha-conotoxin ArIB" evidence="7">
    <location>
        <begin position="20"/>
        <end position="36"/>
    </location>
</feature>
<feature type="region of interest" description="Ser-Xaa-Pro motif, crucial for potent interaction with nAChR" evidence="2">
    <location>
        <begin position="24"/>
        <end position="26"/>
    </location>
</feature>
<feature type="modified residue" description="4-hydroxyproline; in ArIA" evidence="7">
    <location>
        <position position="33"/>
    </location>
</feature>
<feature type="disulfide bond" evidence="7">
    <location>
        <begin position="22"/>
        <end position="28"/>
    </location>
</feature>
<feature type="disulfide bond" evidence="7">
    <location>
        <begin position="23"/>
        <end position="36"/>
    </location>
</feature>
<feature type="mutagenesis site" description="8.8-fold decrease in inhibition of alpha-7/CHRNA7 and 2.5 increase in inhibition of alpha-3-beta-2/CHRNA3-CHRNB2 nAChR." evidence="3">
    <original>NPA</original>
    <variation>RPP</variation>
    <location>
        <begin position="25"/>
        <end position="27"/>
    </location>
</feature>
<feature type="mutagenesis site" description="3.4-fold and 1.5-fold increase in inhibition of alpha-7/CHRNA7 and alpha-3-beta-2/CHRNA3-CHRNA2 nAChR (ArIB[V30L]). 5.1-fold increase in inhibition of alpha-7/CHRNA7 and 1.2-fold decrease in inhibition of alpha-3-beta-2/CHRNA3-CHRNB2 nAChR; when associated with A-35 (ArIB[V30L,V35A]). 1.7-fold increase in inhibition of alpha-7/CHRNA7 and complete loss of inhibition of alpha-3-beta-2/CHRNA3-CHRNB2 nAChR; when associated with D-35 (ArIB[V30L,V35D])." evidence="3">
    <original>V</original>
    <variation>L</variation>
    <location>
        <position position="30"/>
    </location>
</feature>
<feature type="mutagenesis site" description="5.1-fold increase in inhibition of alpha-7/CHRNA7 and 1.2-fold decrease in inhibition of alpha-3-beta-2/CHRNA3-CHRNB2 nAChR; when associated with L-30 (ArIB[V30L,V35A])." evidence="3">
    <original>V</original>
    <variation>A</variation>
    <location>
        <position position="35"/>
    </location>
</feature>
<feature type="mutagenesis site" description="1.7-fold increase in inhibition of alpha-7/CHRNA7 and complete loss of inhibition of alpha-3-beta-2/CHRNA3-CHRNB2 nAChR; when associated with L-30 (ArIB[V30L,V35D])." evidence="3">
    <original>V</original>
    <variation>D</variation>
    <location>
        <position position="35"/>
    </location>
</feature>
<feature type="non-terminal residue">
    <location>
        <position position="1"/>
    </location>
</feature>
<sequence length="39" mass="4437">SDGRNVAAKAFHRIGRTIRDECCSNPACRVNNPHVCRRR</sequence>
<protein>
    <recommendedName>
        <fullName evidence="5">Alpha-conotoxin ArIA</fullName>
    </recommendedName>
    <component>
        <recommendedName>
            <fullName evidence="5">Alpha-conotoxin ArIB</fullName>
        </recommendedName>
    </component>
</protein>
<reference key="1">
    <citation type="journal article" date="2007" name="Biochemistry">
        <title>Discovery, synthesis, and structure activity of a highly selective alpha7 nicotinic acetylcholine receptor antagonist.</title>
        <authorList>
            <person name="Whiteaker P."/>
            <person name="Christensen S."/>
            <person name="Yoshikami D."/>
            <person name="Dowell C."/>
            <person name="Watkins M."/>
            <person name="Gulyas J."/>
            <person name="Rivier J."/>
            <person name="Olivera B.M."/>
            <person name="McIntosh J.M."/>
        </authorList>
    </citation>
    <scope>NUCLEOTIDE SEQUENCE [MRNA]</scope>
    <scope>SYNTHESIS OF 20-39</scope>
    <scope>MUTAGENESIS OF 25-ASN--ALA-27; VAL-30 AND VAL-35</scope>
    <scope>HYDROXYLATION AT PRO-33</scope>
</reference>
<reference key="2">
    <citation type="journal article" date="2008" name="J. Pharmacol. Exp. Ther.">
        <title>Alpha-conotoxin Arenatus IB[V11L,V16D] is a potent and selective antagonist at rat and human native alpha7 nicotinic acetylcholine receptors.</title>
        <authorList>
            <person name="Innocent N."/>
            <person name="Livingstone P.D."/>
            <person name="Hone A."/>
            <person name="Kimura A."/>
            <person name="Young T."/>
            <person name="Whiteaker P."/>
            <person name="McIntosh J.M."/>
            <person name="Wonnacott S."/>
        </authorList>
    </citation>
    <scope>MUTAGENESIS OF VAL-30 AND VAL-35</scope>
</reference>
<reference key="3">
    <citation type="journal article" date="2008" name="J. Pharmacol. Exp. Ther.">
        <title>Correction to 'alpha-conotoxin Arenatus IB[V11l,V16D] is a potent and selective antagonist at rat and human native alpha7 nicotinic acetylcholine receptors'.</title>
        <authorList>
            <person name="Innocent N."/>
            <person name="Livingstone P.D."/>
            <person name="Hone A."/>
            <person name="Kimura A."/>
            <person name="Young T."/>
            <person name="Whiteaker P."/>
            <person name="McIntosh J.M."/>
            <person name="Wonnacott S."/>
        </authorList>
    </citation>
    <scope>ERRATUM OF PUBMED:18664588</scope>
</reference>